<accession>P0C7X4</accession>
<gene>
    <name type="primary">FTH1P19</name>
    <name type="synonym">FTHL19</name>
</gene>
<name>FHL19_HUMAN</name>
<evidence type="ECO:0000255" key="1">
    <source>
        <dbReference type="PROSITE-ProRule" id="PRU00085"/>
    </source>
</evidence>
<evidence type="ECO:0000305" key="2"/>
<dbReference type="EMBL" id="AJ239329">
    <property type="status" value="NOT_ANNOTATED_CDS"/>
    <property type="molecule type" value="Genomic_DNA"/>
</dbReference>
<dbReference type="SMR" id="P0C7X4"/>
<dbReference type="FunCoup" id="P0C7X4">
    <property type="interactions" value="50"/>
</dbReference>
<dbReference type="GlyGen" id="P0C7X4">
    <property type="glycosylation" value="1 site"/>
</dbReference>
<dbReference type="BioMuta" id="HGNC:33525"/>
<dbReference type="DMDM" id="206557856"/>
<dbReference type="MassIVE" id="P0C7X4"/>
<dbReference type="ProteomicsDB" id="52388"/>
<dbReference type="AGR" id="HGNC:33525"/>
<dbReference type="GeneCards" id="FTH1P19"/>
<dbReference type="HGNC" id="HGNC:33525">
    <property type="gene designation" value="FTH1P19"/>
</dbReference>
<dbReference type="neXtProt" id="NX_P0C7X4"/>
<dbReference type="InParanoid" id="P0C7X4"/>
<dbReference type="PAN-GO" id="P0C7X4">
    <property type="GO annotations" value="4 GO annotations based on evolutionary models"/>
</dbReference>
<dbReference type="PhylomeDB" id="P0C7X4"/>
<dbReference type="Pharos" id="P0C7X4">
    <property type="development level" value="Tdark"/>
</dbReference>
<dbReference type="Proteomes" id="UP000005640">
    <property type="component" value="Unplaced"/>
</dbReference>
<dbReference type="RNAct" id="P0C7X4">
    <property type="molecule type" value="protein"/>
</dbReference>
<dbReference type="GO" id="GO:0005737">
    <property type="term" value="C:cytoplasm"/>
    <property type="evidence" value="ECO:0000318"/>
    <property type="project" value="GO_Central"/>
</dbReference>
<dbReference type="GO" id="GO:0008199">
    <property type="term" value="F:ferric iron binding"/>
    <property type="evidence" value="ECO:0000318"/>
    <property type="project" value="GO_Central"/>
</dbReference>
<dbReference type="GO" id="GO:0008198">
    <property type="term" value="F:ferrous iron binding"/>
    <property type="evidence" value="ECO:0000318"/>
    <property type="project" value="GO_Central"/>
</dbReference>
<dbReference type="GO" id="GO:0006879">
    <property type="term" value="P:intracellular iron ion homeostasis"/>
    <property type="evidence" value="ECO:0007669"/>
    <property type="project" value="UniProtKB-KW"/>
</dbReference>
<dbReference type="GO" id="GO:0006826">
    <property type="term" value="P:iron ion transport"/>
    <property type="evidence" value="ECO:0007669"/>
    <property type="project" value="InterPro"/>
</dbReference>
<dbReference type="CDD" id="cd01056">
    <property type="entry name" value="Euk_Ferritin"/>
    <property type="match status" value="1"/>
</dbReference>
<dbReference type="FunFam" id="1.20.1260.10:FF:000016">
    <property type="entry name" value="Ferritin heavy chain"/>
    <property type="match status" value="1"/>
</dbReference>
<dbReference type="Gene3D" id="1.20.1260.10">
    <property type="match status" value="1"/>
</dbReference>
<dbReference type="InterPro" id="IPR001519">
    <property type="entry name" value="Ferritin"/>
</dbReference>
<dbReference type="InterPro" id="IPR012347">
    <property type="entry name" value="Ferritin-like"/>
</dbReference>
<dbReference type="InterPro" id="IPR009040">
    <property type="entry name" value="Ferritin-like_diiron"/>
</dbReference>
<dbReference type="InterPro" id="IPR009078">
    <property type="entry name" value="Ferritin-like_SF"/>
</dbReference>
<dbReference type="InterPro" id="IPR014034">
    <property type="entry name" value="Ferritin_CS"/>
</dbReference>
<dbReference type="InterPro" id="IPR008331">
    <property type="entry name" value="Ferritin_DPS_dom"/>
</dbReference>
<dbReference type="PANTHER" id="PTHR11431">
    <property type="entry name" value="FERRITIN"/>
    <property type="match status" value="1"/>
</dbReference>
<dbReference type="PANTHER" id="PTHR11431:SF97">
    <property type="entry name" value="FERRITIN HEAVY POLYPEPTIDE-LIKE 17-RELATED"/>
    <property type="match status" value="1"/>
</dbReference>
<dbReference type="Pfam" id="PF00210">
    <property type="entry name" value="Ferritin"/>
    <property type="match status" value="1"/>
</dbReference>
<dbReference type="SUPFAM" id="SSF47240">
    <property type="entry name" value="Ferritin-like"/>
    <property type="match status" value="1"/>
</dbReference>
<dbReference type="PROSITE" id="PS00204">
    <property type="entry name" value="FERRITIN_2"/>
    <property type="match status" value="1"/>
</dbReference>
<dbReference type="PROSITE" id="PS50905">
    <property type="entry name" value="FERRITIN_LIKE"/>
    <property type="match status" value="1"/>
</dbReference>
<comment type="similarity">
    <text evidence="2">Belongs to the ferritin family.</text>
</comment>
<comment type="caution">
    <text evidence="2">Could be the product of a pseudogene.</text>
</comment>
<reference key="1">
    <citation type="journal article" date="2005" name="Nature">
        <title>The DNA sequence of the human X chromosome.</title>
        <authorList>
            <person name="Ross M.T."/>
            <person name="Grafham D.V."/>
            <person name="Coffey A.J."/>
            <person name="Scherer S."/>
            <person name="McLay K."/>
            <person name="Muzny D."/>
            <person name="Platzer M."/>
            <person name="Howell G.R."/>
            <person name="Burrows C."/>
            <person name="Bird C.P."/>
            <person name="Frankish A."/>
            <person name="Lovell F.L."/>
            <person name="Howe K.L."/>
            <person name="Ashurst J.L."/>
            <person name="Fulton R.S."/>
            <person name="Sudbrak R."/>
            <person name="Wen G."/>
            <person name="Jones M.C."/>
            <person name="Hurles M.E."/>
            <person name="Andrews T.D."/>
            <person name="Scott C.E."/>
            <person name="Searle S."/>
            <person name="Ramser J."/>
            <person name="Whittaker A."/>
            <person name="Deadman R."/>
            <person name="Carter N.P."/>
            <person name="Hunt S.E."/>
            <person name="Chen R."/>
            <person name="Cree A."/>
            <person name="Gunaratne P."/>
            <person name="Havlak P."/>
            <person name="Hodgson A."/>
            <person name="Metzker M.L."/>
            <person name="Richards S."/>
            <person name="Scott G."/>
            <person name="Steffen D."/>
            <person name="Sodergren E."/>
            <person name="Wheeler D.A."/>
            <person name="Worley K.C."/>
            <person name="Ainscough R."/>
            <person name="Ambrose K.D."/>
            <person name="Ansari-Lari M.A."/>
            <person name="Aradhya S."/>
            <person name="Ashwell R.I."/>
            <person name="Babbage A.K."/>
            <person name="Bagguley C.L."/>
            <person name="Ballabio A."/>
            <person name="Banerjee R."/>
            <person name="Barker G.E."/>
            <person name="Barlow K.F."/>
            <person name="Barrett I.P."/>
            <person name="Bates K.N."/>
            <person name="Beare D.M."/>
            <person name="Beasley H."/>
            <person name="Beasley O."/>
            <person name="Beck A."/>
            <person name="Bethel G."/>
            <person name="Blechschmidt K."/>
            <person name="Brady N."/>
            <person name="Bray-Allen S."/>
            <person name="Bridgeman A.M."/>
            <person name="Brown A.J."/>
            <person name="Brown M.J."/>
            <person name="Bonnin D."/>
            <person name="Bruford E.A."/>
            <person name="Buhay C."/>
            <person name="Burch P."/>
            <person name="Burford D."/>
            <person name="Burgess J."/>
            <person name="Burrill W."/>
            <person name="Burton J."/>
            <person name="Bye J.M."/>
            <person name="Carder C."/>
            <person name="Carrel L."/>
            <person name="Chako J."/>
            <person name="Chapman J.C."/>
            <person name="Chavez D."/>
            <person name="Chen E."/>
            <person name="Chen G."/>
            <person name="Chen Y."/>
            <person name="Chen Z."/>
            <person name="Chinault C."/>
            <person name="Ciccodicola A."/>
            <person name="Clark S.Y."/>
            <person name="Clarke G."/>
            <person name="Clee C.M."/>
            <person name="Clegg S."/>
            <person name="Clerc-Blankenburg K."/>
            <person name="Clifford K."/>
            <person name="Cobley V."/>
            <person name="Cole C.G."/>
            <person name="Conquer J.S."/>
            <person name="Corby N."/>
            <person name="Connor R.E."/>
            <person name="David R."/>
            <person name="Davies J."/>
            <person name="Davis C."/>
            <person name="Davis J."/>
            <person name="Delgado O."/>
            <person name="Deshazo D."/>
            <person name="Dhami P."/>
            <person name="Ding Y."/>
            <person name="Dinh H."/>
            <person name="Dodsworth S."/>
            <person name="Draper H."/>
            <person name="Dugan-Rocha S."/>
            <person name="Dunham A."/>
            <person name="Dunn M."/>
            <person name="Durbin K.J."/>
            <person name="Dutta I."/>
            <person name="Eades T."/>
            <person name="Ellwood M."/>
            <person name="Emery-Cohen A."/>
            <person name="Errington H."/>
            <person name="Evans K.L."/>
            <person name="Faulkner L."/>
            <person name="Francis F."/>
            <person name="Frankland J."/>
            <person name="Fraser A.E."/>
            <person name="Galgoczy P."/>
            <person name="Gilbert J."/>
            <person name="Gill R."/>
            <person name="Gloeckner G."/>
            <person name="Gregory S.G."/>
            <person name="Gribble S."/>
            <person name="Griffiths C."/>
            <person name="Grocock R."/>
            <person name="Gu Y."/>
            <person name="Gwilliam R."/>
            <person name="Hamilton C."/>
            <person name="Hart E.A."/>
            <person name="Hawes A."/>
            <person name="Heath P.D."/>
            <person name="Heitmann K."/>
            <person name="Hennig S."/>
            <person name="Hernandez J."/>
            <person name="Hinzmann B."/>
            <person name="Ho S."/>
            <person name="Hoffs M."/>
            <person name="Howden P.J."/>
            <person name="Huckle E.J."/>
            <person name="Hume J."/>
            <person name="Hunt P.J."/>
            <person name="Hunt A.R."/>
            <person name="Isherwood J."/>
            <person name="Jacob L."/>
            <person name="Johnson D."/>
            <person name="Jones S."/>
            <person name="de Jong P.J."/>
            <person name="Joseph S.S."/>
            <person name="Keenan S."/>
            <person name="Kelly S."/>
            <person name="Kershaw J.K."/>
            <person name="Khan Z."/>
            <person name="Kioschis P."/>
            <person name="Klages S."/>
            <person name="Knights A.J."/>
            <person name="Kosiura A."/>
            <person name="Kovar-Smith C."/>
            <person name="Laird G.K."/>
            <person name="Langford C."/>
            <person name="Lawlor S."/>
            <person name="Leversha M."/>
            <person name="Lewis L."/>
            <person name="Liu W."/>
            <person name="Lloyd C."/>
            <person name="Lloyd D.M."/>
            <person name="Loulseged H."/>
            <person name="Loveland J.E."/>
            <person name="Lovell J.D."/>
            <person name="Lozado R."/>
            <person name="Lu J."/>
            <person name="Lyne R."/>
            <person name="Ma J."/>
            <person name="Maheshwari M."/>
            <person name="Matthews L.H."/>
            <person name="McDowall J."/>
            <person name="McLaren S."/>
            <person name="McMurray A."/>
            <person name="Meidl P."/>
            <person name="Meitinger T."/>
            <person name="Milne S."/>
            <person name="Miner G."/>
            <person name="Mistry S.L."/>
            <person name="Morgan M."/>
            <person name="Morris S."/>
            <person name="Mueller I."/>
            <person name="Mullikin J.C."/>
            <person name="Nguyen N."/>
            <person name="Nordsiek G."/>
            <person name="Nyakatura G."/>
            <person name="O'dell C.N."/>
            <person name="Okwuonu G."/>
            <person name="Palmer S."/>
            <person name="Pandian R."/>
            <person name="Parker D."/>
            <person name="Parrish J."/>
            <person name="Pasternak S."/>
            <person name="Patel D."/>
            <person name="Pearce A.V."/>
            <person name="Pearson D.M."/>
            <person name="Pelan S.E."/>
            <person name="Perez L."/>
            <person name="Porter K.M."/>
            <person name="Ramsey Y."/>
            <person name="Reichwald K."/>
            <person name="Rhodes S."/>
            <person name="Ridler K.A."/>
            <person name="Schlessinger D."/>
            <person name="Schueler M.G."/>
            <person name="Sehra H.K."/>
            <person name="Shaw-Smith C."/>
            <person name="Shen H."/>
            <person name="Sheridan E.M."/>
            <person name="Shownkeen R."/>
            <person name="Skuce C.D."/>
            <person name="Smith M.L."/>
            <person name="Sotheran E.C."/>
            <person name="Steingruber H.E."/>
            <person name="Steward C.A."/>
            <person name="Storey R."/>
            <person name="Swann R.M."/>
            <person name="Swarbreck D."/>
            <person name="Tabor P.E."/>
            <person name="Taudien S."/>
            <person name="Taylor T."/>
            <person name="Teague B."/>
            <person name="Thomas K."/>
            <person name="Thorpe A."/>
            <person name="Timms K."/>
            <person name="Tracey A."/>
            <person name="Trevanion S."/>
            <person name="Tromans A.C."/>
            <person name="d'Urso M."/>
            <person name="Verduzco D."/>
            <person name="Villasana D."/>
            <person name="Waldron L."/>
            <person name="Wall M."/>
            <person name="Wang Q."/>
            <person name="Warren J."/>
            <person name="Warry G.L."/>
            <person name="Wei X."/>
            <person name="West A."/>
            <person name="Whitehead S.L."/>
            <person name="Whiteley M.N."/>
            <person name="Wilkinson J.E."/>
            <person name="Willey D.L."/>
            <person name="Williams G."/>
            <person name="Williams L."/>
            <person name="Williamson A."/>
            <person name="Williamson H."/>
            <person name="Wilming L."/>
            <person name="Woodmansey R.L."/>
            <person name="Wray P.W."/>
            <person name="Yen J."/>
            <person name="Zhang J."/>
            <person name="Zhou J."/>
            <person name="Zoghbi H."/>
            <person name="Zorilla S."/>
            <person name="Buck D."/>
            <person name="Reinhardt R."/>
            <person name="Poustka A."/>
            <person name="Rosenthal A."/>
            <person name="Lehrach H."/>
            <person name="Meindl A."/>
            <person name="Minx P.J."/>
            <person name="Hillier L.W."/>
            <person name="Willard H.F."/>
            <person name="Wilson R.K."/>
            <person name="Waterston R.H."/>
            <person name="Rice C.M."/>
            <person name="Vaudin M."/>
            <person name="Coulson A."/>
            <person name="Nelson D.L."/>
            <person name="Weinstock G."/>
            <person name="Sulston J.E."/>
            <person name="Durbin R.M."/>
            <person name="Hubbard T."/>
            <person name="Gibbs R.A."/>
            <person name="Beck S."/>
            <person name="Rogers J."/>
            <person name="Bentley D.R."/>
        </authorList>
    </citation>
    <scope>NUCLEOTIDE SEQUENCE [LARGE SCALE GENOMIC DNA]</scope>
</reference>
<keyword id="KW-0408">Iron</keyword>
<keyword id="KW-0409">Iron storage</keyword>
<keyword id="KW-0479">Metal-binding</keyword>
<keyword id="KW-1267">Proteomics identification</keyword>
<keyword id="KW-1185">Reference proteome</keyword>
<organism>
    <name type="scientific">Homo sapiens</name>
    <name type="common">Human</name>
    <dbReference type="NCBI Taxonomy" id="9606"/>
    <lineage>
        <taxon>Eukaryota</taxon>
        <taxon>Metazoa</taxon>
        <taxon>Chordata</taxon>
        <taxon>Craniata</taxon>
        <taxon>Vertebrata</taxon>
        <taxon>Euteleostomi</taxon>
        <taxon>Mammalia</taxon>
        <taxon>Eutheria</taxon>
        <taxon>Euarchontoglires</taxon>
        <taxon>Primates</taxon>
        <taxon>Haplorrhini</taxon>
        <taxon>Catarrhini</taxon>
        <taxon>Hominidae</taxon>
        <taxon>Homo</taxon>
    </lineage>
</organism>
<sequence>MAFYFDQDDAALEHFDRYFLRQSQEKREHAQELMSLQNLRGGRICLHDIRKPEGQGWESGLKAMECTFHLEKNINQSLLELHQLARENGDPQLCDFLENDFLNQQAKTIKELGGYLSNLHKMGAPEAGLAEYLFNKLTLGRSQKHTRAQTGPTATGCLPLLAPPGGTSMFPFQNILFIFLLSVLPLLAIKLSVLKAIKVSS</sequence>
<proteinExistence type="uncertain"/>
<protein>
    <recommendedName>
        <fullName>Putative ferritin heavy polypeptide-like 19</fullName>
    </recommendedName>
    <alternativeName>
        <fullName>Ferritin heavy polypeptide 1 pseudogene 19</fullName>
    </alternativeName>
</protein>
<feature type="chain" id="PRO_0000344975" description="Putative ferritin heavy polypeptide-like 19">
    <location>
        <begin position="1"/>
        <end position="201"/>
    </location>
</feature>
<feature type="domain" description="Ferritin-like diiron" evidence="1">
    <location>
        <begin position="1"/>
        <end position="123"/>
    </location>
</feature>
<feature type="sequence variant" id="VAR_045633" description="In dbSNP:rs7058438.">
    <original>R</original>
    <variation>H</variation>
    <location>
        <position position="17"/>
    </location>
</feature>
<feature type="sequence variant" id="VAR_045634" description="In dbSNP:rs7055365.">
    <original>A</original>
    <variation>P</variation>
    <location>
        <position position="106"/>
    </location>
</feature>